<evidence type="ECO:0000255" key="1"/>
<evidence type="ECO:0000269" key="2">
    <source>
    </source>
</evidence>
<evidence type="ECO:0000269" key="3">
    <source>
    </source>
</evidence>
<evidence type="ECO:0000305" key="4"/>
<evidence type="ECO:0007829" key="5">
    <source>
        <dbReference type="PDB" id="2MY1"/>
    </source>
</evidence>
<evidence type="ECO:0007829" key="6">
    <source>
        <dbReference type="PDB" id="6J6G"/>
    </source>
</evidence>
<evidence type="ECO:0007829" key="7">
    <source>
        <dbReference type="PDB" id="9DTR"/>
    </source>
</evidence>
<feature type="chain" id="PRO_0000193902" description="Pre-mRNA-splicing factor BUD31">
    <location>
        <begin position="1"/>
        <end position="157"/>
    </location>
</feature>
<feature type="short sequence motif" description="Nuclear localization signal" evidence="1">
    <location>
        <begin position="2"/>
        <end position="11"/>
    </location>
</feature>
<feature type="strand" evidence="6">
    <location>
        <begin position="7"/>
        <end position="9"/>
    </location>
</feature>
<feature type="helix" evidence="7">
    <location>
        <begin position="16"/>
        <end position="33"/>
    </location>
</feature>
<feature type="helix" evidence="7">
    <location>
        <begin position="42"/>
        <end position="68"/>
    </location>
</feature>
<feature type="helix" evidence="7">
    <location>
        <begin position="75"/>
        <end position="83"/>
    </location>
</feature>
<feature type="strand" evidence="5">
    <location>
        <begin position="84"/>
        <end position="86"/>
    </location>
</feature>
<feature type="helix" evidence="7">
    <location>
        <begin position="89"/>
        <end position="95"/>
    </location>
</feature>
<feature type="turn" evidence="6">
    <location>
        <begin position="99"/>
        <end position="102"/>
    </location>
</feature>
<feature type="helix" evidence="7">
    <location>
        <begin position="106"/>
        <end position="109"/>
    </location>
</feature>
<feature type="helix" evidence="7">
    <location>
        <begin position="111"/>
        <end position="113"/>
    </location>
</feature>
<feature type="strand" evidence="6">
    <location>
        <begin position="114"/>
        <end position="117"/>
    </location>
</feature>
<feature type="helix" evidence="7">
    <location>
        <begin position="121"/>
        <end position="123"/>
    </location>
</feature>
<feature type="helix" evidence="7">
    <location>
        <begin position="126"/>
        <end position="136"/>
    </location>
</feature>
<feature type="strand" evidence="7">
    <location>
        <begin position="146"/>
        <end position="148"/>
    </location>
</feature>
<accession>P25337</accession>
<accession>D6VR67</accession>
<organism>
    <name type="scientific">Saccharomyces cerevisiae (strain ATCC 204508 / S288c)</name>
    <name type="common">Baker's yeast</name>
    <dbReference type="NCBI Taxonomy" id="559292"/>
    <lineage>
        <taxon>Eukaryota</taxon>
        <taxon>Fungi</taxon>
        <taxon>Dikarya</taxon>
        <taxon>Ascomycota</taxon>
        <taxon>Saccharomycotina</taxon>
        <taxon>Saccharomycetes</taxon>
        <taxon>Saccharomycetales</taxon>
        <taxon>Saccharomycetaceae</taxon>
        <taxon>Saccharomyces</taxon>
    </lineage>
</organism>
<dbReference type="EMBL" id="X59720">
    <property type="protein sequence ID" value="CAA42278.1"/>
    <property type="molecule type" value="Genomic_DNA"/>
</dbReference>
<dbReference type="EMBL" id="BK006937">
    <property type="protein sequence ID" value="DAA07536.1"/>
    <property type="molecule type" value="Genomic_DNA"/>
</dbReference>
<dbReference type="PIR" id="S22261">
    <property type="entry name" value="S22261"/>
</dbReference>
<dbReference type="RefSeq" id="NP_009990.1">
    <property type="nucleotide sequence ID" value="NM_001178774.1"/>
</dbReference>
<dbReference type="PDB" id="2MY1">
    <property type="method" value="NMR"/>
    <property type="chains" value="A=2-157"/>
</dbReference>
<dbReference type="PDB" id="5GM6">
    <property type="method" value="EM"/>
    <property type="resolution" value="3.50 A"/>
    <property type="chains" value="T=1-157"/>
</dbReference>
<dbReference type="PDB" id="5GMK">
    <property type="method" value="EM"/>
    <property type="resolution" value="3.40 A"/>
    <property type="chains" value="T=1-157"/>
</dbReference>
<dbReference type="PDB" id="5LJ3">
    <property type="method" value="EM"/>
    <property type="resolution" value="3.80 A"/>
    <property type="chains" value="L=1-157"/>
</dbReference>
<dbReference type="PDB" id="5LJ5">
    <property type="method" value="EM"/>
    <property type="resolution" value="3.80 A"/>
    <property type="chains" value="L=1-157"/>
</dbReference>
<dbReference type="PDB" id="5LQW">
    <property type="method" value="EM"/>
    <property type="resolution" value="5.80 A"/>
    <property type="chains" value="E=1-157"/>
</dbReference>
<dbReference type="PDB" id="5MPS">
    <property type="method" value="EM"/>
    <property type="resolution" value="3.85 A"/>
    <property type="chains" value="L=1-157"/>
</dbReference>
<dbReference type="PDB" id="5MQ0">
    <property type="method" value="EM"/>
    <property type="resolution" value="4.17 A"/>
    <property type="chains" value="L=1-157"/>
</dbReference>
<dbReference type="PDB" id="5WSG">
    <property type="method" value="EM"/>
    <property type="resolution" value="4.00 A"/>
    <property type="chains" value="T=1-157"/>
</dbReference>
<dbReference type="PDB" id="5Y88">
    <property type="method" value="EM"/>
    <property type="resolution" value="3.70 A"/>
    <property type="chains" value="L=1-157"/>
</dbReference>
<dbReference type="PDB" id="5YLZ">
    <property type="method" value="EM"/>
    <property type="resolution" value="3.60 A"/>
    <property type="chains" value="L=1-157"/>
</dbReference>
<dbReference type="PDB" id="6BK8">
    <property type="method" value="EM"/>
    <property type="resolution" value="3.30 A"/>
    <property type="chains" value="I=1-157"/>
</dbReference>
<dbReference type="PDB" id="6EXN">
    <property type="method" value="EM"/>
    <property type="resolution" value="3.70 A"/>
    <property type="chains" value="L=1-157"/>
</dbReference>
<dbReference type="PDB" id="6J6G">
    <property type="method" value="EM"/>
    <property type="resolution" value="3.20 A"/>
    <property type="chains" value="T=1-157"/>
</dbReference>
<dbReference type="PDB" id="6J6H">
    <property type="method" value="EM"/>
    <property type="resolution" value="3.60 A"/>
    <property type="chains" value="T=1-157"/>
</dbReference>
<dbReference type="PDB" id="6J6N">
    <property type="method" value="EM"/>
    <property type="resolution" value="3.86 A"/>
    <property type="chains" value="T=1-157"/>
</dbReference>
<dbReference type="PDB" id="6J6Q">
    <property type="method" value="EM"/>
    <property type="resolution" value="3.70 A"/>
    <property type="chains" value="T=1-157"/>
</dbReference>
<dbReference type="PDB" id="9DTR">
    <property type="method" value="EM"/>
    <property type="resolution" value="2.31 A"/>
    <property type="chains" value="L=1-157"/>
</dbReference>
<dbReference type="PDBsum" id="2MY1"/>
<dbReference type="PDBsum" id="5GM6"/>
<dbReference type="PDBsum" id="5GMK"/>
<dbReference type="PDBsum" id="5LJ3"/>
<dbReference type="PDBsum" id="5LJ5"/>
<dbReference type="PDBsum" id="5LQW"/>
<dbReference type="PDBsum" id="5MPS"/>
<dbReference type="PDBsum" id="5MQ0"/>
<dbReference type="PDBsum" id="5WSG"/>
<dbReference type="PDBsum" id="5Y88"/>
<dbReference type="PDBsum" id="5YLZ"/>
<dbReference type="PDBsum" id="6BK8"/>
<dbReference type="PDBsum" id="6EXN"/>
<dbReference type="PDBsum" id="6J6G"/>
<dbReference type="PDBsum" id="6J6H"/>
<dbReference type="PDBsum" id="6J6N"/>
<dbReference type="PDBsum" id="6J6Q"/>
<dbReference type="PDBsum" id="9DTR"/>
<dbReference type="EMDB" id="EMD-0686"/>
<dbReference type="EMDB" id="EMD-0687"/>
<dbReference type="EMDB" id="EMD-0691"/>
<dbReference type="EMDB" id="EMD-0692"/>
<dbReference type="EMDB" id="EMD-3539"/>
<dbReference type="EMDB" id="EMD-3541"/>
<dbReference type="EMDB" id="EMD-3979"/>
<dbReference type="EMDB" id="EMD-4055"/>
<dbReference type="EMDB" id="EMD-4057"/>
<dbReference type="EMDB" id="EMD-47157"/>
<dbReference type="EMDB" id="EMD-6817"/>
<dbReference type="EMDB" id="EMD-6839"/>
<dbReference type="EMDB" id="EMD-7109"/>
<dbReference type="EMDB" id="EMD-9524"/>
<dbReference type="EMDB" id="EMD-9525"/>
<dbReference type="SMR" id="P25337"/>
<dbReference type="BioGRID" id="31040">
    <property type="interactions" value="766"/>
</dbReference>
<dbReference type="ComplexPortal" id="CPX-1651">
    <property type="entry name" value="PRP19-associated complex"/>
</dbReference>
<dbReference type="DIP" id="DIP-1180N"/>
<dbReference type="FunCoup" id="P25337">
    <property type="interactions" value="1101"/>
</dbReference>
<dbReference type="IntAct" id="P25337">
    <property type="interactions" value="55"/>
</dbReference>
<dbReference type="MINT" id="P25337"/>
<dbReference type="STRING" id="4932.YCR063W"/>
<dbReference type="iPTMnet" id="P25337"/>
<dbReference type="PaxDb" id="4932-YCR063W"/>
<dbReference type="PeptideAtlas" id="P25337"/>
<dbReference type="EnsemblFungi" id="YCR063W_mRNA">
    <property type="protein sequence ID" value="YCR063W"/>
    <property type="gene ID" value="YCR063W"/>
</dbReference>
<dbReference type="GeneID" id="850427"/>
<dbReference type="KEGG" id="sce:YCR063W"/>
<dbReference type="AGR" id="SGD:S000000659"/>
<dbReference type="SGD" id="S000000659">
    <property type="gene designation" value="BUD31"/>
</dbReference>
<dbReference type="VEuPathDB" id="FungiDB:YCR063W"/>
<dbReference type="eggNOG" id="KOG3404">
    <property type="taxonomic scope" value="Eukaryota"/>
</dbReference>
<dbReference type="GeneTree" id="ENSGT00390000014300"/>
<dbReference type="HOGENOM" id="CLU_087132_1_1_1"/>
<dbReference type="InParanoid" id="P25337"/>
<dbReference type="OMA" id="FGTSCIC"/>
<dbReference type="OrthoDB" id="277109at2759"/>
<dbReference type="BioCyc" id="YEAST:G3O-29367-MONOMER"/>
<dbReference type="BioGRID-ORCS" id="850427">
    <property type="hits" value="0 hits in 10 CRISPR screens"/>
</dbReference>
<dbReference type="EvolutionaryTrace" id="P25337"/>
<dbReference type="PRO" id="PR:P25337"/>
<dbReference type="Proteomes" id="UP000002311">
    <property type="component" value="Chromosome III"/>
</dbReference>
<dbReference type="RNAct" id="P25337">
    <property type="molecule type" value="protein"/>
</dbReference>
<dbReference type="GO" id="GO:0005634">
    <property type="term" value="C:nucleus"/>
    <property type="evidence" value="ECO:0007005"/>
    <property type="project" value="SGD"/>
</dbReference>
<dbReference type="GO" id="GO:0000974">
    <property type="term" value="C:Prp19 complex"/>
    <property type="evidence" value="ECO:0000353"/>
    <property type="project" value="ComplexPortal"/>
</dbReference>
<dbReference type="GO" id="GO:0005681">
    <property type="term" value="C:spliceosomal complex"/>
    <property type="evidence" value="ECO:0000318"/>
    <property type="project" value="GO_Central"/>
</dbReference>
<dbReference type="GO" id="GO:0005686">
    <property type="term" value="C:U2 snRNP"/>
    <property type="evidence" value="ECO:0000314"/>
    <property type="project" value="SGD"/>
</dbReference>
<dbReference type="GO" id="GO:0000282">
    <property type="term" value="P:cellular bud site selection"/>
    <property type="evidence" value="ECO:0007001"/>
    <property type="project" value="SGD"/>
</dbReference>
<dbReference type="GO" id="GO:0000398">
    <property type="term" value="P:mRNA splicing, via spliceosome"/>
    <property type="evidence" value="ECO:0000353"/>
    <property type="project" value="SGD"/>
</dbReference>
<dbReference type="InterPro" id="IPR001748">
    <property type="entry name" value="BUD31"/>
</dbReference>
<dbReference type="InterPro" id="IPR018230">
    <property type="entry name" value="BUD31/G10-rel_CS"/>
</dbReference>
<dbReference type="PANTHER" id="PTHR19411:SF0">
    <property type="entry name" value="PROTEIN BUD31 HOMOLOG"/>
    <property type="match status" value="1"/>
</dbReference>
<dbReference type="PANTHER" id="PTHR19411">
    <property type="entry name" value="PROTEIN BUD31-RELATED"/>
    <property type="match status" value="1"/>
</dbReference>
<dbReference type="Pfam" id="PF01125">
    <property type="entry name" value="BUD31"/>
    <property type="match status" value="1"/>
</dbReference>
<dbReference type="PRINTS" id="PR00322">
    <property type="entry name" value="G10"/>
</dbReference>
<dbReference type="PROSITE" id="PS00997">
    <property type="entry name" value="G10_1"/>
    <property type="match status" value="1"/>
</dbReference>
<dbReference type="PROSITE" id="PS00998">
    <property type="entry name" value="G10_2"/>
    <property type="match status" value="1"/>
</dbReference>
<name>BUD31_YEAST</name>
<protein>
    <recommendedName>
        <fullName>Pre-mRNA-splicing factor BUD31</fullName>
    </recommendedName>
    <alternativeName>
        <fullName>Bud site selection protein 31</fullName>
    </alternativeName>
    <alternativeName>
        <fullName>Complexed with CEF1 protein 14</fullName>
    </alternativeName>
</protein>
<reference key="1">
    <citation type="journal article" date="1992" name="Yeast">
        <title>Sequence of the sup61-RAD18 region on chromosome III of Saccharomyces cerevisiae.</title>
        <authorList>
            <person name="Benit P."/>
            <person name="Chanet R."/>
            <person name="Fabre F."/>
            <person name="Faye G."/>
            <person name="Fukuhara H."/>
            <person name="Sor F."/>
        </authorList>
    </citation>
    <scope>NUCLEOTIDE SEQUENCE [GENOMIC DNA]</scope>
</reference>
<reference key="2">
    <citation type="journal article" date="1992" name="Nature">
        <title>The complete DNA sequence of yeast chromosome III.</title>
        <authorList>
            <person name="Oliver S.G."/>
            <person name="van der Aart Q.J.M."/>
            <person name="Agostoni-Carbone M.L."/>
            <person name="Aigle M."/>
            <person name="Alberghina L."/>
            <person name="Alexandraki D."/>
            <person name="Antoine G."/>
            <person name="Anwar R."/>
            <person name="Ballesta J.P.G."/>
            <person name="Benit P."/>
            <person name="Berben G."/>
            <person name="Bergantino E."/>
            <person name="Biteau N."/>
            <person name="Bolle P.-A."/>
            <person name="Bolotin-Fukuhara M."/>
            <person name="Brown A."/>
            <person name="Brown A.J.P."/>
            <person name="Buhler J.-M."/>
            <person name="Carcano C."/>
            <person name="Carignani G."/>
            <person name="Cederberg H."/>
            <person name="Chanet R."/>
            <person name="Contreras R."/>
            <person name="Crouzet M."/>
            <person name="Daignan-Fornier B."/>
            <person name="Defoor E."/>
            <person name="Delgado M.D."/>
            <person name="Demolder J."/>
            <person name="Doira C."/>
            <person name="Dubois E."/>
            <person name="Dujon B."/>
            <person name="Duesterhoeft A."/>
            <person name="Erdmann D."/>
            <person name="Esteban M."/>
            <person name="Fabre F."/>
            <person name="Fairhead C."/>
            <person name="Faye G."/>
            <person name="Feldmann H."/>
            <person name="Fiers W."/>
            <person name="Francingues-Gaillard M.-C."/>
            <person name="Franco L."/>
            <person name="Frontali L."/>
            <person name="Fukuhara H."/>
            <person name="Fuller L.J."/>
            <person name="Galland P."/>
            <person name="Gent M.E."/>
            <person name="Gigot D."/>
            <person name="Gilliquet V."/>
            <person name="Glansdorff N."/>
            <person name="Goffeau A."/>
            <person name="Grenson M."/>
            <person name="Grisanti P."/>
            <person name="Grivell L.A."/>
            <person name="de Haan M."/>
            <person name="Haasemann M."/>
            <person name="Hatat D."/>
            <person name="Hoenicka J."/>
            <person name="Hegemann J.H."/>
            <person name="Herbert C.J."/>
            <person name="Hilger F."/>
            <person name="Hohmann S."/>
            <person name="Hollenberg C.P."/>
            <person name="Huse K."/>
            <person name="Iborra F."/>
            <person name="Indge K.J."/>
            <person name="Isono K."/>
            <person name="Jacq C."/>
            <person name="Jacquet M."/>
            <person name="James C.M."/>
            <person name="Jauniaux J.-C."/>
            <person name="Jia Y."/>
            <person name="Jimenez A."/>
            <person name="Kelly A."/>
            <person name="Kleinhans U."/>
            <person name="Kreisl P."/>
            <person name="Lanfranchi G."/>
            <person name="Lewis C."/>
            <person name="van der Linden C.G."/>
            <person name="Lucchini G."/>
            <person name="Lutzenkirchen K."/>
            <person name="Maat M.J."/>
            <person name="Mallet L."/>
            <person name="Mannhaupt G."/>
            <person name="Martegani E."/>
            <person name="Mathieu A."/>
            <person name="Maurer C.T.C."/>
            <person name="McConnell D."/>
            <person name="McKee R.A."/>
            <person name="Messenguy F."/>
            <person name="Mewes H.-W."/>
            <person name="Molemans F."/>
            <person name="Montague M.A."/>
            <person name="Muzi Falconi M."/>
            <person name="Navas L."/>
            <person name="Newlon C.S."/>
            <person name="Noone D."/>
            <person name="Pallier C."/>
            <person name="Panzeri L."/>
            <person name="Pearson B.M."/>
            <person name="Perea J."/>
            <person name="Philippsen P."/>
            <person name="Pierard A."/>
            <person name="Planta R.J."/>
            <person name="Plevani P."/>
            <person name="Poetsch B."/>
            <person name="Pohl F.M."/>
            <person name="Purnelle B."/>
            <person name="Ramezani Rad M."/>
            <person name="Rasmussen S.W."/>
            <person name="Raynal A."/>
            <person name="Remacha M.A."/>
            <person name="Richterich P."/>
            <person name="Roberts A.B."/>
            <person name="Rodriguez F."/>
            <person name="Sanz E."/>
            <person name="Schaaff-Gerstenschlaeger I."/>
            <person name="Scherens B."/>
            <person name="Schweitzer B."/>
            <person name="Shu Y."/>
            <person name="Skala J."/>
            <person name="Slonimski P.P."/>
            <person name="Sor F."/>
            <person name="Soustelle C."/>
            <person name="Spiegelberg R."/>
            <person name="Stateva L.I."/>
            <person name="Steensma H.Y."/>
            <person name="Steiner S."/>
            <person name="Thierry A."/>
            <person name="Thireos G."/>
            <person name="Tzermia M."/>
            <person name="Urrestarazu L.A."/>
            <person name="Valle G."/>
            <person name="Vetter I."/>
            <person name="van Vliet-Reedijk J.C."/>
            <person name="Voet M."/>
            <person name="Volckaert G."/>
            <person name="Vreken P."/>
            <person name="Wang H."/>
            <person name="Warmington J.R."/>
            <person name="von Wettstein D."/>
            <person name="Wicksteed B.L."/>
            <person name="Wilson C."/>
            <person name="Wurst H."/>
            <person name="Xu G."/>
            <person name="Yoshikawa A."/>
            <person name="Zimmermann F.K."/>
            <person name="Sgouros J.G."/>
        </authorList>
    </citation>
    <scope>NUCLEOTIDE SEQUENCE [LARGE SCALE GENOMIC DNA]</scope>
    <source>
        <strain>ATCC 204508 / S288c</strain>
    </source>
</reference>
<reference key="3">
    <citation type="journal article" date="2014" name="G3 (Bethesda)">
        <title>The reference genome sequence of Saccharomyces cerevisiae: Then and now.</title>
        <authorList>
            <person name="Engel S.R."/>
            <person name="Dietrich F.S."/>
            <person name="Fisk D.G."/>
            <person name="Binkley G."/>
            <person name="Balakrishnan R."/>
            <person name="Costanzo M.C."/>
            <person name="Dwight S.S."/>
            <person name="Hitz B.C."/>
            <person name="Karra K."/>
            <person name="Nash R.S."/>
            <person name="Weng S."/>
            <person name="Wong E.D."/>
            <person name="Lloyd P."/>
            <person name="Skrzypek M.S."/>
            <person name="Miyasato S.R."/>
            <person name="Simison M."/>
            <person name="Cherry J.M."/>
        </authorList>
    </citation>
    <scope>GENOME REANNOTATION</scope>
    <source>
        <strain>ATCC 204508 / S288c</strain>
    </source>
</reference>
<reference key="4">
    <citation type="journal article" date="2002" name="Mol. Cell. Biol.">
        <title>Proteomics analysis reveals stable multiprotein complexes in both fission and budding yeasts containing Myb-related Cdc5p/Cef1p, novel pre-mRNA splicing factors, and snRNAs.</title>
        <authorList>
            <person name="Ohi M.D."/>
            <person name="Link A.J."/>
            <person name="Ren L."/>
            <person name="Jennings J.L."/>
            <person name="McDonald W.H."/>
            <person name="Gould K.L."/>
        </authorList>
    </citation>
    <scope>IDENTIFICATION IN THE CWC COMPLEX</scope>
    <scope>IDENTIFICATION BY MASS SPECTROMETRY</scope>
</reference>
<reference key="5">
    <citation type="journal article" date="2001" name="Mol. Biol. Cell">
        <title>A genomic study of the bipolar bud site selection pattern in Saccharomyces cerevisiae.</title>
        <authorList>
            <person name="Ni L."/>
            <person name="Snyder M."/>
        </authorList>
    </citation>
    <scope>INVOLVEMENT IN BUDDING</scope>
</reference>
<reference key="6">
    <citation type="journal article" date="2003" name="Nature">
        <title>Global analysis of protein expression in yeast.</title>
        <authorList>
            <person name="Ghaemmaghami S."/>
            <person name="Huh W.-K."/>
            <person name="Bower K."/>
            <person name="Howson R.W."/>
            <person name="Belle A."/>
            <person name="Dephoure N."/>
            <person name="O'Shea E.K."/>
            <person name="Weissman J.S."/>
        </authorList>
    </citation>
    <scope>LEVEL OF PROTEIN EXPRESSION [LARGE SCALE ANALYSIS]</scope>
</reference>
<proteinExistence type="evidence at protein level"/>
<comment type="function">
    <text>Involved in pre-mRNA splicing. Important for bud site selection.</text>
</comment>
<comment type="subunit">
    <text evidence="2">Belongs to the CWC complex (or CEF1-associated complex), a spliceosome sub-complex reminiscent of a late-stage spliceosome composed of the U2, U5 and U6 snRNAs and at least BUD13, BUD31, BRR2, CDC40, CEF1, CLF1, CUS1, CWC2, CWC15, CWC21, CWC22, CWC23, CWC24, CWC25, CWC27, ECM2, HSH155, IST3, ISY1, LEA1, MSL1, NTC20, PRP8, PRP9, PRP11, PRP19, PRP21, PRP22, PRP45, PRP46, SLU7, SMB1, SMD1, SMD2, SMD3, SMX2, SMX3, SNT309, SNU114, SPP2, SYF1, SYF2, RSE1 and YJU2.</text>
</comment>
<comment type="interaction">
    <interactant intactId="EBI-547">
        <id>P25337</id>
    </interactant>
    <interactant intactId="EBI-476">
        <id>Q03654</id>
        <label>CEF1</label>
    </interactant>
    <organismsDiffer>false</organismsDiffer>
    <experiments>13</experiments>
</comment>
<comment type="subcellular location">
    <subcellularLocation>
        <location evidence="4">Nucleus</location>
    </subcellularLocation>
</comment>
<comment type="miscellaneous">
    <text evidence="3">Present with 1900 molecules/cell in log phase SD medium.</text>
</comment>
<comment type="similarity">
    <text evidence="4">Belongs to the BUD31 (G10) family.</text>
</comment>
<sequence length="157" mass="18447">MPRIKTRRSKPAPDGFEKIKPTLTDFEIQLRDAQKDKSSKLAAKSNEQLWEIMQLHHQRSRYIYTLYYKRKAISKDLYDWLIKEKYADKLLIAKWRKTGYEKLCCLRCIQKNETNNGSTCICRVPRAQLEEEARKKGTQVSFHQCVHCGCRGCASTD</sequence>
<gene>
    <name type="primary">BUD31</name>
    <name type="synonym">CWC14</name>
    <name type="ordered locus">YCR063W</name>
    <name type="ORF">YCR63W</name>
    <name type="ORF">YCR903</name>
</gene>
<keyword id="KW-0002">3D-structure</keyword>
<keyword id="KW-0507">mRNA processing</keyword>
<keyword id="KW-0508">mRNA splicing</keyword>
<keyword id="KW-0539">Nucleus</keyword>
<keyword id="KW-1185">Reference proteome</keyword>